<evidence type="ECO:0000255" key="1">
    <source>
        <dbReference type="HAMAP-Rule" id="MF_00267"/>
    </source>
</evidence>
<evidence type="ECO:0000256" key="2">
    <source>
        <dbReference type="SAM" id="MobiDB-lite"/>
    </source>
</evidence>
<comment type="function">
    <text evidence="1">Cell division inhibitor that blocks the formation of polar Z ring septums. Rapidly oscillates between the poles of the cell to destabilize FtsZ filaments that have formed before they mature into polar Z rings. Prevents FtsZ polymerization.</text>
</comment>
<comment type="subunit">
    <text evidence="1">Interacts with MinD and FtsZ.</text>
</comment>
<comment type="similarity">
    <text evidence="1">Belongs to the MinC family.</text>
</comment>
<dbReference type="EMBL" id="AM167904">
    <property type="protein sequence ID" value="CAJ50399.1"/>
    <property type="molecule type" value="Genomic_DNA"/>
</dbReference>
<dbReference type="RefSeq" id="WP_012418430.1">
    <property type="nucleotide sequence ID" value="NC_010645.1"/>
</dbReference>
<dbReference type="SMR" id="Q2KVW8"/>
<dbReference type="STRING" id="360910.BAV2788"/>
<dbReference type="GeneID" id="92933964"/>
<dbReference type="KEGG" id="bav:BAV2788"/>
<dbReference type="eggNOG" id="COG0850">
    <property type="taxonomic scope" value="Bacteria"/>
</dbReference>
<dbReference type="HOGENOM" id="CLU_067812_0_0_4"/>
<dbReference type="OrthoDB" id="9794530at2"/>
<dbReference type="Proteomes" id="UP000001977">
    <property type="component" value="Chromosome"/>
</dbReference>
<dbReference type="GO" id="GO:0000902">
    <property type="term" value="P:cell morphogenesis"/>
    <property type="evidence" value="ECO:0007669"/>
    <property type="project" value="InterPro"/>
</dbReference>
<dbReference type="GO" id="GO:0000917">
    <property type="term" value="P:division septum assembly"/>
    <property type="evidence" value="ECO:0007669"/>
    <property type="project" value="UniProtKB-KW"/>
</dbReference>
<dbReference type="GO" id="GO:0051302">
    <property type="term" value="P:regulation of cell division"/>
    <property type="evidence" value="ECO:0007669"/>
    <property type="project" value="InterPro"/>
</dbReference>
<dbReference type="GO" id="GO:1901891">
    <property type="term" value="P:regulation of cell septum assembly"/>
    <property type="evidence" value="ECO:0007669"/>
    <property type="project" value="InterPro"/>
</dbReference>
<dbReference type="Gene3D" id="2.160.20.70">
    <property type="match status" value="1"/>
</dbReference>
<dbReference type="Gene3D" id="3.30.70.260">
    <property type="match status" value="1"/>
</dbReference>
<dbReference type="HAMAP" id="MF_00267">
    <property type="entry name" value="MinC"/>
    <property type="match status" value="1"/>
</dbReference>
<dbReference type="InterPro" id="IPR016098">
    <property type="entry name" value="CAP/MinC_C"/>
</dbReference>
<dbReference type="InterPro" id="IPR013033">
    <property type="entry name" value="MinC"/>
</dbReference>
<dbReference type="InterPro" id="IPR036145">
    <property type="entry name" value="MinC_C_sf"/>
</dbReference>
<dbReference type="InterPro" id="IPR007874">
    <property type="entry name" value="MinC_N"/>
</dbReference>
<dbReference type="InterPro" id="IPR005526">
    <property type="entry name" value="Septum_form_inhib_MinC_C"/>
</dbReference>
<dbReference type="NCBIfam" id="TIGR01222">
    <property type="entry name" value="minC"/>
    <property type="match status" value="1"/>
</dbReference>
<dbReference type="PANTHER" id="PTHR34108">
    <property type="entry name" value="SEPTUM SITE-DETERMINING PROTEIN MINC"/>
    <property type="match status" value="1"/>
</dbReference>
<dbReference type="PANTHER" id="PTHR34108:SF1">
    <property type="entry name" value="SEPTUM SITE-DETERMINING PROTEIN MINC"/>
    <property type="match status" value="1"/>
</dbReference>
<dbReference type="Pfam" id="PF03775">
    <property type="entry name" value="MinC_C"/>
    <property type="match status" value="1"/>
</dbReference>
<dbReference type="Pfam" id="PF05209">
    <property type="entry name" value="MinC_N"/>
    <property type="match status" value="1"/>
</dbReference>
<dbReference type="SUPFAM" id="SSF63848">
    <property type="entry name" value="Cell-division inhibitor MinC, C-terminal domain"/>
    <property type="match status" value="1"/>
</dbReference>
<reference key="1">
    <citation type="journal article" date="2006" name="J. Bacteriol.">
        <title>Comparison of the genome sequence of the poultry pathogen Bordetella avium with those of B. bronchiseptica, B. pertussis, and B. parapertussis reveals extensive diversity in surface structures associated with host interaction.</title>
        <authorList>
            <person name="Sebaihia M."/>
            <person name="Preston A."/>
            <person name="Maskell D.J."/>
            <person name="Kuzmiak H."/>
            <person name="Connell T.D."/>
            <person name="King N.D."/>
            <person name="Orndorff P.E."/>
            <person name="Miyamoto D.M."/>
            <person name="Thomson N.R."/>
            <person name="Harris D."/>
            <person name="Goble A."/>
            <person name="Lord A."/>
            <person name="Murphy L."/>
            <person name="Quail M.A."/>
            <person name="Rutter S."/>
            <person name="Squares R."/>
            <person name="Squares S."/>
            <person name="Woodward J."/>
            <person name="Parkhill J."/>
            <person name="Temple L.M."/>
        </authorList>
    </citation>
    <scope>NUCLEOTIDE SEQUENCE [LARGE SCALE GENOMIC DNA]</scope>
    <source>
        <strain>197N</strain>
    </source>
</reference>
<proteinExistence type="inferred from homology"/>
<name>MINC_BORA1</name>
<accession>Q2KVW8</accession>
<feature type="chain" id="PRO_1000047805" description="Probable septum site-determining protein MinC">
    <location>
        <begin position="1"/>
        <end position="278"/>
    </location>
</feature>
<feature type="region of interest" description="Disordered" evidence="2">
    <location>
        <begin position="104"/>
        <end position="167"/>
    </location>
</feature>
<gene>
    <name evidence="1" type="primary">minC</name>
    <name type="ordered locus">BAV2788</name>
</gene>
<protein>
    <recommendedName>
        <fullName evidence="1">Probable septum site-determining protein MinC</fullName>
    </recommendedName>
</protein>
<sequence length="278" mass="29374">MTTEPLALDFKSATLYAIRVVLHSADPDQLAEALGRRMADAGSFFENEAVVIDASRVSAPIDWPALVKALGAHKLPVIGVVAENGNLERARAAGLIPVELSAPRTQQSVDPAPPNHVSTPVPAAPEASRAAQEQLRSAMKGDAQAVPTRAARDTTEAASHTPAAPQSSTALVITKPLRSGQRVYARHTDLVVIGMVSQGAEVIADGNIHVYGPLRGKAMAGARGDTSARIFTTHLDAELLAVAGVYRVVEDRLDRNLHNQPALVRLNGDTLHIEALKS</sequence>
<keyword id="KW-0131">Cell cycle</keyword>
<keyword id="KW-0132">Cell division</keyword>
<keyword id="KW-1185">Reference proteome</keyword>
<keyword id="KW-0717">Septation</keyword>
<organism>
    <name type="scientific">Bordetella avium (strain 197N)</name>
    <dbReference type="NCBI Taxonomy" id="360910"/>
    <lineage>
        <taxon>Bacteria</taxon>
        <taxon>Pseudomonadati</taxon>
        <taxon>Pseudomonadota</taxon>
        <taxon>Betaproteobacteria</taxon>
        <taxon>Burkholderiales</taxon>
        <taxon>Alcaligenaceae</taxon>
        <taxon>Bordetella</taxon>
    </lineage>
</organism>